<reference key="1">
    <citation type="submission" date="1995-10" db="EMBL/GenBank/DDBJ databases">
        <title>Cloning, expression and sequencing of Aeromonas hydrophila alpha-hemolysin gene determinant.</title>
        <authorList>
            <person name="Chen J.D."/>
            <person name="Lai S.Y."/>
            <person name="Chen C.H."/>
        </authorList>
    </citation>
    <scope>NUCLEOTIDE SEQUENCE [GENOMIC DNA]</scope>
    <source>
        <strain>Ah20</strain>
    </source>
</reference>
<dbReference type="EMBL" id="L36462">
    <property type="protein sequence ID" value="AAB81225.1"/>
    <property type="molecule type" value="Genomic_DNA"/>
</dbReference>
<dbReference type="GO" id="GO:0005886">
    <property type="term" value="C:plasma membrane"/>
    <property type="evidence" value="ECO:0007669"/>
    <property type="project" value="UniProtKB-SubCell"/>
</dbReference>
<dbReference type="GO" id="GO:0090729">
    <property type="term" value="F:toxin activity"/>
    <property type="evidence" value="ECO:0007669"/>
    <property type="project" value="UniProtKB-KW"/>
</dbReference>
<dbReference type="GO" id="GO:0031640">
    <property type="term" value="P:killing of cells of another organism"/>
    <property type="evidence" value="ECO:0007669"/>
    <property type="project" value="UniProtKB-KW"/>
</dbReference>
<dbReference type="HAMAP" id="MF_00386">
    <property type="entry name" value="UPF0161_YidD"/>
    <property type="match status" value="1"/>
</dbReference>
<dbReference type="InterPro" id="IPR002696">
    <property type="entry name" value="Membr_insert_effic_factor_YidD"/>
</dbReference>
<dbReference type="NCBIfam" id="TIGR00278">
    <property type="entry name" value="membrane protein insertion efficiency factor YidD"/>
    <property type="match status" value="1"/>
</dbReference>
<dbReference type="PANTHER" id="PTHR33383">
    <property type="entry name" value="MEMBRANE PROTEIN INSERTION EFFICIENCY FACTOR-RELATED"/>
    <property type="match status" value="1"/>
</dbReference>
<dbReference type="PANTHER" id="PTHR33383:SF1">
    <property type="entry name" value="MEMBRANE PROTEIN INSERTION EFFICIENCY FACTOR-RELATED"/>
    <property type="match status" value="1"/>
</dbReference>
<dbReference type="Pfam" id="PF01809">
    <property type="entry name" value="YidD"/>
    <property type="match status" value="1"/>
</dbReference>
<dbReference type="SMART" id="SM01234">
    <property type="entry name" value="Haemolytic"/>
    <property type="match status" value="1"/>
</dbReference>
<name>HLYA_AERHY</name>
<accession>Q44066</accession>
<evidence type="ECO:0000255" key="1">
    <source>
        <dbReference type="HAMAP-Rule" id="MF_00386"/>
    </source>
</evidence>
<evidence type="ECO:0000305" key="2"/>
<protein>
    <recommendedName>
        <fullName evidence="1">Putative membrane protein insertion efficiency factor</fullName>
    </recommendedName>
    <alternativeName>
        <fullName>Putative alpha-hemolysin</fullName>
    </alternativeName>
</protein>
<organism>
    <name type="scientific">Aeromonas hydrophila</name>
    <dbReference type="NCBI Taxonomy" id="644"/>
    <lineage>
        <taxon>Bacteria</taxon>
        <taxon>Pseudomonadati</taxon>
        <taxon>Pseudomonadota</taxon>
        <taxon>Gammaproteobacteria</taxon>
        <taxon>Aeromonadales</taxon>
        <taxon>Aeromonadaceae</taxon>
        <taxon>Aeromonas</taxon>
    </lineage>
</organism>
<sequence length="85" mass="9345">MASALSPGSRVLIALIRVYQRLISPLLGPHCRFTPTCSSYGIEALRRFGVIKGSWLTVKRVLKCHPLHPGGDDPVPPGPFDTREH</sequence>
<keyword id="KW-1003">Cell membrane</keyword>
<keyword id="KW-0204">Cytolysis</keyword>
<keyword id="KW-0354">Hemolysis</keyword>
<keyword id="KW-0472">Membrane</keyword>
<keyword id="KW-0800">Toxin</keyword>
<keyword id="KW-0843">Virulence</keyword>
<proteinExistence type="inferred from homology"/>
<comment type="function">
    <text evidence="1">Could be involved in insertion of integral membrane proteins into the membrane.</text>
</comment>
<comment type="function">
    <text evidence="2">Lyses fish blood cells.</text>
</comment>
<comment type="subcellular location">
    <subcellularLocation>
        <location evidence="1">Cell membrane</location>
        <topology evidence="1">Peripheral membrane protein</topology>
        <orientation evidence="1">Cytoplasmic side</orientation>
    </subcellularLocation>
</comment>
<comment type="similarity">
    <text evidence="1">Belongs to the UPF0161 family.</text>
</comment>
<feature type="chain" id="PRO_0000171785" description="Putative membrane protein insertion efficiency factor">
    <location>
        <begin position="1"/>
        <end position="85"/>
    </location>
</feature>
<gene>
    <name type="primary">hlyA</name>
</gene>